<accession>Q72BL6</accession>
<proteinExistence type="inferred from homology"/>
<comment type="function">
    <text evidence="1">Catalyzes the interconversion of 2-phosphoglycerate and 3-phosphoglycerate.</text>
</comment>
<comment type="catalytic activity">
    <reaction evidence="1">
        <text>(2R)-2-phosphoglycerate = (2R)-3-phosphoglycerate</text>
        <dbReference type="Rhea" id="RHEA:15901"/>
        <dbReference type="ChEBI" id="CHEBI:58272"/>
        <dbReference type="ChEBI" id="CHEBI:58289"/>
        <dbReference type="EC" id="5.4.2.12"/>
    </reaction>
</comment>
<comment type="cofactor">
    <cofactor evidence="1">
        <name>Mn(2+)</name>
        <dbReference type="ChEBI" id="CHEBI:29035"/>
    </cofactor>
    <text evidence="1">Binds 2 manganese ions per subunit.</text>
</comment>
<comment type="pathway">
    <text evidence="1">Carbohydrate degradation; glycolysis; pyruvate from D-glyceraldehyde 3-phosphate: step 3/5.</text>
</comment>
<comment type="subunit">
    <text evidence="1">Monomer.</text>
</comment>
<comment type="similarity">
    <text evidence="1">Belongs to the BPG-independent phosphoglycerate mutase family.</text>
</comment>
<reference key="1">
    <citation type="journal article" date="2004" name="Nat. Biotechnol.">
        <title>The genome sequence of the anaerobic, sulfate-reducing bacterium Desulfovibrio vulgaris Hildenborough.</title>
        <authorList>
            <person name="Heidelberg J.F."/>
            <person name="Seshadri R."/>
            <person name="Haveman S.A."/>
            <person name="Hemme C.L."/>
            <person name="Paulsen I.T."/>
            <person name="Kolonay J.F."/>
            <person name="Eisen J.A."/>
            <person name="Ward N.L."/>
            <person name="Methe B.A."/>
            <person name="Brinkac L.M."/>
            <person name="Daugherty S.C."/>
            <person name="DeBoy R.T."/>
            <person name="Dodson R.J."/>
            <person name="Durkin A.S."/>
            <person name="Madupu R."/>
            <person name="Nelson W.C."/>
            <person name="Sullivan S.A."/>
            <person name="Fouts D.E."/>
            <person name="Haft D.H."/>
            <person name="Selengut J."/>
            <person name="Peterson J.D."/>
            <person name="Davidsen T.M."/>
            <person name="Zafar N."/>
            <person name="Zhou L."/>
            <person name="Radune D."/>
            <person name="Dimitrov G."/>
            <person name="Hance M."/>
            <person name="Tran K."/>
            <person name="Khouri H.M."/>
            <person name="Gill J."/>
            <person name="Utterback T.R."/>
            <person name="Feldblyum T.V."/>
            <person name="Wall J.D."/>
            <person name="Voordouw G."/>
            <person name="Fraser C.M."/>
        </authorList>
    </citation>
    <scope>NUCLEOTIDE SEQUENCE [LARGE SCALE GENOMIC DNA]</scope>
    <source>
        <strain>ATCC 29579 / DSM 644 / CCUG 34227 / NCIMB 8303 / VKM B-1760 / Hildenborough</strain>
    </source>
</reference>
<dbReference type="EC" id="5.4.2.12" evidence="1"/>
<dbReference type="EMBL" id="AE017285">
    <property type="protein sequence ID" value="AAS96097.1"/>
    <property type="molecule type" value="Genomic_DNA"/>
</dbReference>
<dbReference type="RefSeq" id="WP_010938910.1">
    <property type="nucleotide sequence ID" value="NC_002937.3"/>
</dbReference>
<dbReference type="RefSeq" id="YP_010838.1">
    <property type="nucleotide sequence ID" value="NC_002937.3"/>
</dbReference>
<dbReference type="SMR" id="Q72BL6"/>
<dbReference type="STRING" id="882.DVU_1619"/>
<dbReference type="PaxDb" id="882-DVU_1619"/>
<dbReference type="EnsemblBacteria" id="AAS96097">
    <property type="protein sequence ID" value="AAS96097"/>
    <property type="gene ID" value="DVU_1619"/>
</dbReference>
<dbReference type="KEGG" id="dvu:DVU_1619"/>
<dbReference type="PATRIC" id="fig|882.5.peg.1493"/>
<dbReference type="eggNOG" id="COG0696">
    <property type="taxonomic scope" value="Bacteria"/>
</dbReference>
<dbReference type="HOGENOM" id="CLU_026099_2_0_7"/>
<dbReference type="OrthoDB" id="9800863at2"/>
<dbReference type="PhylomeDB" id="Q72BL6"/>
<dbReference type="UniPathway" id="UPA00109">
    <property type="reaction ID" value="UER00186"/>
</dbReference>
<dbReference type="Proteomes" id="UP000002194">
    <property type="component" value="Chromosome"/>
</dbReference>
<dbReference type="GO" id="GO:0005829">
    <property type="term" value="C:cytosol"/>
    <property type="evidence" value="ECO:0007669"/>
    <property type="project" value="TreeGrafter"/>
</dbReference>
<dbReference type="GO" id="GO:0030145">
    <property type="term" value="F:manganese ion binding"/>
    <property type="evidence" value="ECO:0007669"/>
    <property type="project" value="UniProtKB-UniRule"/>
</dbReference>
<dbReference type="GO" id="GO:0004619">
    <property type="term" value="F:phosphoglycerate mutase activity"/>
    <property type="evidence" value="ECO:0007669"/>
    <property type="project" value="UniProtKB-EC"/>
</dbReference>
<dbReference type="GO" id="GO:0006007">
    <property type="term" value="P:glucose catabolic process"/>
    <property type="evidence" value="ECO:0007669"/>
    <property type="project" value="InterPro"/>
</dbReference>
<dbReference type="GO" id="GO:0006096">
    <property type="term" value="P:glycolytic process"/>
    <property type="evidence" value="ECO:0007669"/>
    <property type="project" value="UniProtKB-UniRule"/>
</dbReference>
<dbReference type="CDD" id="cd16010">
    <property type="entry name" value="iPGM"/>
    <property type="match status" value="1"/>
</dbReference>
<dbReference type="FunFam" id="3.40.1450.10:FF:000002">
    <property type="entry name" value="2,3-bisphosphoglycerate-independent phosphoglycerate mutase"/>
    <property type="match status" value="1"/>
</dbReference>
<dbReference type="Gene3D" id="3.40.720.10">
    <property type="entry name" value="Alkaline Phosphatase, subunit A"/>
    <property type="match status" value="1"/>
</dbReference>
<dbReference type="Gene3D" id="3.40.1450.10">
    <property type="entry name" value="BPG-independent phosphoglycerate mutase, domain B"/>
    <property type="match status" value="1"/>
</dbReference>
<dbReference type="HAMAP" id="MF_01038">
    <property type="entry name" value="GpmI"/>
    <property type="match status" value="1"/>
</dbReference>
<dbReference type="InterPro" id="IPR017850">
    <property type="entry name" value="Alkaline_phosphatase_core_sf"/>
</dbReference>
<dbReference type="InterPro" id="IPR011258">
    <property type="entry name" value="BPG-indep_PGM_N"/>
</dbReference>
<dbReference type="InterPro" id="IPR006124">
    <property type="entry name" value="Metalloenzyme"/>
</dbReference>
<dbReference type="InterPro" id="IPR036646">
    <property type="entry name" value="PGAM_B_sf"/>
</dbReference>
<dbReference type="InterPro" id="IPR005995">
    <property type="entry name" value="Pgm_bpd_ind"/>
</dbReference>
<dbReference type="NCBIfam" id="TIGR01307">
    <property type="entry name" value="pgm_bpd_ind"/>
    <property type="match status" value="1"/>
</dbReference>
<dbReference type="PANTHER" id="PTHR31637">
    <property type="entry name" value="2,3-BISPHOSPHOGLYCERATE-INDEPENDENT PHOSPHOGLYCERATE MUTASE"/>
    <property type="match status" value="1"/>
</dbReference>
<dbReference type="PANTHER" id="PTHR31637:SF0">
    <property type="entry name" value="2,3-BISPHOSPHOGLYCERATE-INDEPENDENT PHOSPHOGLYCERATE MUTASE"/>
    <property type="match status" value="1"/>
</dbReference>
<dbReference type="Pfam" id="PF06415">
    <property type="entry name" value="iPGM_N"/>
    <property type="match status" value="1"/>
</dbReference>
<dbReference type="Pfam" id="PF01676">
    <property type="entry name" value="Metalloenzyme"/>
    <property type="match status" value="1"/>
</dbReference>
<dbReference type="PIRSF" id="PIRSF001492">
    <property type="entry name" value="IPGAM"/>
    <property type="match status" value="1"/>
</dbReference>
<dbReference type="SUPFAM" id="SSF64158">
    <property type="entry name" value="2,3-Bisphosphoglycerate-independent phosphoglycerate mutase, substrate-binding domain"/>
    <property type="match status" value="1"/>
</dbReference>
<dbReference type="SUPFAM" id="SSF53649">
    <property type="entry name" value="Alkaline phosphatase-like"/>
    <property type="match status" value="1"/>
</dbReference>
<name>GPMI_NITV2</name>
<sequence length="511" mass="54089">MSLKPTLLLILDGWGKAPAGPGNAVTLAGMPHLSSLLRQAGCTELACSGRAVGLPEGFMGNSEVGHMNIGAGRVVYQDMTRIDIAVERGELASNPALTGLFEAVRATGGRVHLMGLLSDGGVHSHIAHVEALALAARDAGVEVVVHAFLDGRDTAPTSGVGYVKRLASFLESNRAGRIGSLVGRYYAMDRDKRWDRNLLAWAMLTRGEGAPADDPVGAVEAAYAAGETDEFVKPRVVVEGGSPIGTIRDGDGVFFFNFRADRARQLSHMFVDGTFEHGDRGHVPSLAGFATMTSYDPALGLPVAFDKQPLDGTLGEVVANQGLRQLRIAETEKYAHVTYFLNCGREEPFPGEERRLLPSPRDVATYDLKPEMSAEAVTDTLLEEWAGGGYTLAVCNVANLDMVGHTGVIPAAVRACETVDACVRRIADAVLASGGRLVITADHGNAEELLDESGNPQTAHSMNRVPFTVVEQGRVHTFREGGVLGDIAPTILGLWGVPASAGMTGTSLITE</sequence>
<evidence type="ECO:0000255" key="1">
    <source>
        <dbReference type="HAMAP-Rule" id="MF_01038"/>
    </source>
</evidence>
<organism>
    <name type="scientific">Nitratidesulfovibrio vulgaris (strain ATCC 29579 / DSM 644 / CCUG 34227 / NCIMB 8303 / VKM B-1760 / Hildenborough)</name>
    <name type="common">Desulfovibrio vulgaris</name>
    <dbReference type="NCBI Taxonomy" id="882"/>
    <lineage>
        <taxon>Bacteria</taxon>
        <taxon>Pseudomonadati</taxon>
        <taxon>Thermodesulfobacteriota</taxon>
        <taxon>Desulfovibrionia</taxon>
        <taxon>Desulfovibrionales</taxon>
        <taxon>Desulfovibrionaceae</taxon>
        <taxon>Nitratidesulfovibrio</taxon>
    </lineage>
</organism>
<feature type="chain" id="PRO_0000212141" description="2,3-bisphosphoglycerate-independent phosphoglycerate mutase">
    <location>
        <begin position="1"/>
        <end position="511"/>
    </location>
</feature>
<feature type="active site" description="Phosphoserine intermediate" evidence="1">
    <location>
        <position position="62"/>
    </location>
</feature>
<feature type="binding site" evidence="1">
    <location>
        <position position="12"/>
    </location>
    <ligand>
        <name>Mn(2+)</name>
        <dbReference type="ChEBI" id="CHEBI:29035"/>
        <label>2</label>
    </ligand>
</feature>
<feature type="binding site" evidence="1">
    <location>
        <position position="62"/>
    </location>
    <ligand>
        <name>Mn(2+)</name>
        <dbReference type="ChEBI" id="CHEBI:29035"/>
        <label>2</label>
    </ligand>
</feature>
<feature type="binding site" evidence="1">
    <location>
        <position position="123"/>
    </location>
    <ligand>
        <name>substrate</name>
    </ligand>
</feature>
<feature type="binding site" evidence="1">
    <location>
        <begin position="152"/>
        <end position="153"/>
    </location>
    <ligand>
        <name>substrate</name>
    </ligand>
</feature>
<feature type="binding site" evidence="1">
    <location>
        <position position="184"/>
    </location>
    <ligand>
        <name>substrate</name>
    </ligand>
</feature>
<feature type="binding site" evidence="1">
    <location>
        <position position="190"/>
    </location>
    <ligand>
        <name>substrate</name>
    </ligand>
</feature>
<feature type="binding site" evidence="1">
    <location>
        <begin position="259"/>
        <end position="262"/>
    </location>
    <ligand>
        <name>substrate</name>
    </ligand>
</feature>
<feature type="binding site" evidence="1">
    <location>
        <position position="333"/>
    </location>
    <ligand>
        <name>substrate</name>
    </ligand>
</feature>
<feature type="binding site" evidence="1">
    <location>
        <position position="401"/>
    </location>
    <ligand>
        <name>Mn(2+)</name>
        <dbReference type="ChEBI" id="CHEBI:29035"/>
        <label>1</label>
    </ligand>
</feature>
<feature type="binding site" evidence="1">
    <location>
        <position position="405"/>
    </location>
    <ligand>
        <name>Mn(2+)</name>
        <dbReference type="ChEBI" id="CHEBI:29035"/>
        <label>1</label>
    </ligand>
</feature>
<feature type="binding site" evidence="1">
    <location>
        <position position="442"/>
    </location>
    <ligand>
        <name>Mn(2+)</name>
        <dbReference type="ChEBI" id="CHEBI:29035"/>
        <label>2</label>
    </ligand>
</feature>
<feature type="binding site" evidence="1">
    <location>
        <position position="443"/>
    </location>
    <ligand>
        <name>Mn(2+)</name>
        <dbReference type="ChEBI" id="CHEBI:29035"/>
        <label>2</label>
    </ligand>
</feature>
<feature type="binding site" evidence="1">
    <location>
        <position position="460"/>
    </location>
    <ligand>
        <name>Mn(2+)</name>
        <dbReference type="ChEBI" id="CHEBI:29035"/>
        <label>1</label>
    </ligand>
</feature>
<protein>
    <recommendedName>
        <fullName evidence="1">2,3-bisphosphoglycerate-independent phosphoglycerate mutase</fullName>
        <shortName evidence="1">BPG-independent PGAM</shortName>
        <shortName evidence="1">Phosphoglyceromutase</shortName>
        <shortName evidence="1">iPGM</shortName>
        <ecNumber evidence="1">5.4.2.12</ecNumber>
    </recommendedName>
</protein>
<keyword id="KW-0324">Glycolysis</keyword>
<keyword id="KW-0413">Isomerase</keyword>
<keyword id="KW-0464">Manganese</keyword>
<keyword id="KW-0479">Metal-binding</keyword>
<keyword id="KW-1185">Reference proteome</keyword>
<gene>
    <name evidence="1" type="primary">gpmI</name>
    <name type="synonym">gpmA</name>
    <name type="ordered locus">DVU_1619</name>
</gene>